<reference key="1">
    <citation type="journal article" date="2005" name="Science">
        <title>Life at depth: Photobacterium profundum genome sequence and expression analysis.</title>
        <authorList>
            <person name="Vezzi A."/>
            <person name="Campanaro S."/>
            <person name="D'Angelo M."/>
            <person name="Simonato F."/>
            <person name="Vitulo N."/>
            <person name="Lauro F.M."/>
            <person name="Cestaro A."/>
            <person name="Malacrida G."/>
            <person name="Simionati B."/>
            <person name="Cannata N."/>
            <person name="Romualdi C."/>
            <person name="Bartlett D.H."/>
            <person name="Valle G."/>
        </authorList>
    </citation>
    <scope>NUCLEOTIDE SEQUENCE [LARGE SCALE GENOMIC DNA]</scope>
    <source>
        <strain>ATCC BAA-1253 / SS9</strain>
    </source>
</reference>
<dbReference type="EMBL" id="CR378673">
    <property type="protein sequence ID" value="CAG21665.1"/>
    <property type="molecule type" value="Genomic_DNA"/>
</dbReference>
<dbReference type="RefSeq" id="WP_011219911.1">
    <property type="nucleotide sequence ID" value="NC_006370.1"/>
</dbReference>
<dbReference type="SMR" id="Q6LM13"/>
<dbReference type="STRING" id="298386.PBPRA3380"/>
<dbReference type="KEGG" id="ppr:PBPRA3380"/>
<dbReference type="eggNOG" id="COG3029">
    <property type="taxonomic scope" value="Bacteria"/>
</dbReference>
<dbReference type="HOGENOM" id="CLU_156492_0_0_6"/>
<dbReference type="Proteomes" id="UP000000593">
    <property type="component" value="Chromosome 1"/>
</dbReference>
<dbReference type="GO" id="GO:0045283">
    <property type="term" value="C:fumarate reductase complex"/>
    <property type="evidence" value="ECO:0007669"/>
    <property type="project" value="UniProtKB-UniRule"/>
</dbReference>
<dbReference type="GO" id="GO:0005886">
    <property type="term" value="C:plasma membrane"/>
    <property type="evidence" value="ECO:0007669"/>
    <property type="project" value="UniProtKB-SubCell"/>
</dbReference>
<dbReference type="GO" id="GO:0000104">
    <property type="term" value="F:succinate dehydrogenase activity"/>
    <property type="evidence" value="ECO:0007669"/>
    <property type="project" value="UniProtKB-UniRule"/>
</dbReference>
<dbReference type="CDD" id="cd00546">
    <property type="entry name" value="QFR_TypeD_subunitC"/>
    <property type="match status" value="1"/>
</dbReference>
<dbReference type="Gene3D" id="1.20.1300.10">
    <property type="entry name" value="Fumarate reductase/succinate dehydrogenase, transmembrane subunit"/>
    <property type="match status" value="1"/>
</dbReference>
<dbReference type="HAMAP" id="MF_00708">
    <property type="entry name" value="Fumarate_red_C"/>
    <property type="match status" value="1"/>
</dbReference>
<dbReference type="InterPro" id="IPR003510">
    <property type="entry name" value="Fumarate_red_C"/>
</dbReference>
<dbReference type="InterPro" id="IPR034804">
    <property type="entry name" value="SQR/QFR_C/D"/>
</dbReference>
<dbReference type="NCBIfam" id="NF003445">
    <property type="entry name" value="PRK04987.1"/>
    <property type="match status" value="1"/>
</dbReference>
<dbReference type="Pfam" id="PF02300">
    <property type="entry name" value="Fumarate_red_C"/>
    <property type="match status" value="1"/>
</dbReference>
<dbReference type="PIRSF" id="PIRSF000180">
    <property type="entry name" value="FrdC"/>
    <property type="match status" value="1"/>
</dbReference>
<dbReference type="SUPFAM" id="SSF81343">
    <property type="entry name" value="Fumarate reductase respiratory complex transmembrane subunits"/>
    <property type="match status" value="1"/>
</dbReference>
<name>FRDC_PHOPR</name>
<comment type="function">
    <text evidence="1">Anchors the catalytic components of the fumarate reductase complex to the cell membrane, binds quinones.</text>
</comment>
<comment type="subunit">
    <text evidence="1">Part of an enzyme complex containing four subunits: a flavoprotein (FrdA), an iron-sulfur protein (FrdB), and two hydrophobic anchor proteins (FrdC and FrdD).</text>
</comment>
<comment type="subcellular location">
    <subcellularLocation>
        <location evidence="1">Cell inner membrane</location>
        <topology evidence="1">Multi-pass membrane protein</topology>
    </subcellularLocation>
</comment>
<comment type="similarity">
    <text evidence="1">Belongs to the FrdC family.</text>
</comment>
<evidence type="ECO:0000255" key="1">
    <source>
        <dbReference type="HAMAP-Rule" id="MF_00708"/>
    </source>
</evidence>
<accession>Q6LM13</accession>
<proteinExistence type="inferred from homology"/>
<feature type="chain" id="PRO_1000045529" description="Fumarate reductase subunit C">
    <location>
        <begin position="1"/>
        <end position="127"/>
    </location>
</feature>
<feature type="transmembrane region" description="Helical" evidence="1">
    <location>
        <begin position="30"/>
        <end position="50"/>
    </location>
</feature>
<feature type="transmembrane region" description="Helical" evidence="1">
    <location>
        <begin position="67"/>
        <end position="87"/>
    </location>
</feature>
<feature type="transmembrane region" description="Helical" evidence="1">
    <location>
        <begin position="107"/>
        <end position="127"/>
    </location>
</feature>
<protein>
    <recommendedName>
        <fullName evidence="1">Fumarate reductase subunit C</fullName>
    </recommendedName>
    <alternativeName>
        <fullName evidence="1">Quinol-fumarate reductase subunit C</fullName>
        <shortName evidence="1">QFR subunit C</shortName>
    </alternativeName>
</protein>
<sequence length="127" mass="14506">MSNRKPYVREMTRTWWKDDPFYRFYMVREATILPLIFFTICLTFGLGCLVKGPEAWAGWLSFMSNPIVVVLNILALLGSLFHAQTFFSMMPQVMPITIKGKKLDKTIIVLAQWAAVAAISLFVLVLV</sequence>
<organism>
    <name type="scientific">Photobacterium profundum (strain SS9)</name>
    <dbReference type="NCBI Taxonomy" id="298386"/>
    <lineage>
        <taxon>Bacteria</taxon>
        <taxon>Pseudomonadati</taxon>
        <taxon>Pseudomonadota</taxon>
        <taxon>Gammaproteobacteria</taxon>
        <taxon>Vibrionales</taxon>
        <taxon>Vibrionaceae</taxon>
        <taxon>Photobacterium</taxon>
    </lineage>
</organism>
<keyword id="KW-0997">Cell inner membrane</keyword>
<keyword id="KW-1003">Cell membrane</keyword>
<keyword id="KW-0472">Membrane</keyword>
<keyword id="KW-1185">Reference proteome</keyword>
<keyword id="KW-0812">Transmembrane</keyword>
<keyword id="KW-1133">Transmembrane helix</keyword>
<gene>
    <name evidence="1" type="primary">frdC</name>
    <name type="ordered locus">PBPRA3380</name>
</gene>